<reference key="1">
    <citation type="journal article" date="2002" name="J. Bacteriol.">
        <title>Whole-genome comparison of Mycobacterium tuberculosis clinical and laboratory strains.</title>
        <authorList>
            <person name="Fleischmann R.D."/>
            <person name="Alland D."/>
            <person name="Eisen J.A."/>
            <person name="Carpenter L."/>
            <person name="White O."/>
            <person name="Peterson J.D."/>
            <person name="DeBoy R.T."/>
            <person name="Dodson R.J."/>
            <person name="Gwinn M.L."/>
            <person name="Haft D.H."/>
            <person name="Hickey E.K."/>
            <person name="Kolonay J.F."/>
            <person name="Nelson W.C."/>
            <person name="Umayam L.A."/>
            <person name="Ermolaeva M.D."/>
            <person name="Salzberg S.L."/>
            <person name="Delcher A."/>
            <person name="Utterback T.R."/>
            <person name="Weidman J.F."/>
            <person name="Khouri H.M."/>
            <person name="Gill J."/>
            <person name="Mikula A."/>
            <person name="Bishai W."/>
            <person name="Jacobs W.R. Jr."/>
            <person name="Venter J.C."/>
            <person name="Fraser C.M."/>
        </authorList>
    </citation>
    <scope>NUCLEOTIDE SEQUENCE [LARGE SCALE GENOMIC DNA]</scope>
    <source>
        <strain>CDC 1551 / Oshkosh</strain>
    </source>
</reference>
<sequence>MSLSGPRIGRAHQQQGDTMAINVEPALSPHLVVDDAASAIDFYVKAFDAVELGRVPGPDGKLIHAALRINGFTVMLNDDVPQMCGGKSMTPTSLGGTPVTIHLTVTDVDAKFQRALNAGATVVTALEDQLWGDRYGVVADPFGHHWSLGQPVREVNMDEIQAAMSSQGDG</sequence>
<proteinExistence type="predicted"/>
<feature type="chain" id="PRO_0000427614" description="Uncharacterized protein MT0910">
    <location>
        <begin position="1"/>
        <end position="170"/>
    </location>
</feature>
<feature type="domain" description="VOC" evidence="1">
    <location>
        <begin position="25"/>
        <end position="151"/>
    </location>
</feature>
<accession>P9WKQ2</accession>
<accession>L0T526</accession>
<accession>P64741</accession>
<accession>Q10548</accession>
<name>Y887_MYCTO</name>
<protein>
    <recommendedName>
        <fullName>Uncharacterized protein MT0910</fullName>
    </recommendedName>
</protein>
<organism>
    <name type="scientific">Mycobacterium tuberculosis (strain CDC 1551 / Oshkosh)</name>
    <dbReference type="NCBI Taxonomy" id="83331"/>
    <lineage>
        <taxon>Bacteria</taxon>
        <taxon>Bacillati</taxon>
        <taxon>Actinomycetota</taxon>
        <taxon>Actinomycetes</taxon>
        <taxon>Mycobacteriales</taxon>
        <taxon>Mycobacteriaceae</taxon>
        <taxon>Mycobacterium</taxon>
        <taxon>Mycobacterium tuberculosis complex</taxon>
    </lineage>
</organism>
<dbReference type="EMBL" id="AE000516">
    <property type="protein sequence ID" value="AAK45152.1"/>
    <property type="molecule type" value="Genomic_DNA"/>
</dbReference>
<dbReference type="PIR" id="D70781">
    <property type="entry name" value="D70781"/>
</dbReference>
<dbReference type="SMR" id="P9WKQ2"/>
<dbReference type="KEGG" id="mtc:MT0910"/>
<dbReference type="HOGENOM" id="CLU_046006_11_2_11"/>
<dbReference type="Proteomes" id="UP000001020">
    <property type="component" value="Chromosome"/>
</dbReference>
<dbReference type="CDD" id="cd07246">
    <property type="entry name" value="VOC_like"/>
    <property type="match status" value="1"/>
</dbReference>
<dbReference type="Gene3D" id="3.30.720.110">
    <property type="match status" value="1"/>
</dbReference>
<dbReference type="Gene3D" id="3.30.720.120">
    <property type="match status" value="1"/>
</dbReference>
<dbReference type="InterPro" id="IPR029068">
    <property type="entry name" value="Glyas_Bleomycin-R_OHBP_Dase"/>
</dbReference>
<dbReference type="InterPro" id="IPR004360">
    <property type="entry name" value="Glyas_Fos-R_dOase_dom"/>
</dbReference>
<dbReference type="InterPro" id="IPR037523">
    <property type="entry name" value="VOC"/>
</dbReference>
<dbReference type="PANTHER" id="PTHR34109">
    <property type="entry name" value="BNAUNNG04460D PROTEIN-RELATED"/>
    <property type="match status" value="1"/>
</dbReference>
<dbReference type="PANTHER" id="PTHR34109:SF1">
    <property type="entry name" value="VOC DOMAIN-CONTAINING PROTEIN"/>
    <property type="match status" value="1"/>
</dbReference>
<dbReference type="Pfam" id="PF00903">
    <property type="entry name" value="Glyoxalase"/>
    <property type="match status" value="1"/>
</dbReference>
<dbReference type="SUPFAM" id="SSF54593">
    <property type="entry name" value="Glyoxalase/Bleomycin resistance protein/Dihydroxybiphenyl dioxygenase"/>
    <property type="match status" value="1"/>
</dbReference>
<dbReference type="PROSITE" id="PS51819">
    <property type="entry name" value="VOC"/>
    <property type="match status" value="1"/>
</dbReference>
<keyword id="KW-1185">Reference proteome</keyword>
<gene>
    <name type="ordered locus">MT0910</name>
</gene>
<evidence type="ECO:0000255" key="1">
    <source>
        <dbReference type="PROSITE-ProRule" id="PRU01163"/>
    </source>
</evidence>